<accession>Q9ZKX5</accession>
<proteinExistence type="inferred from homology"/>
<protein>
    <recommendedName>
        <fullName>Catalase</fullName>
        <ecNumber>1.11.1.6</ecNumber>
    </recommendedName>
</protein>
<gene>
    <name type="primary">katA</name>
    <name type="ordered locus">jhp_0809</name>
</gene>
<comment type="function">
    <text>Decomposes hydrogen peroxide into water and oxygen; serves to protect cells from the toxic effects of hydrogen peroxide.</text>
</comment>
<comment type="catalytic activity">
    <reaction evidence="2">
        <text>2 H2O2 = O2 + 2 H2O</text>
        <dbReference type="Rhea" id="RHEA:20309"/>
        <dbReference type="ChEBI" id="CHEBI:15377"/>
        <dbReference type="ChEBI" id="CHEBI:15379"/>
        <dbReference type="ChEBI" id="CHEBI:16240"/>
        <dbReference type="EC" id="1.11.1.6"/>
    </reaction>
</comment>
<comment type="cofactor">
    <cofactor>
        <name>heme</name>
        <dbReference type="ChEBI" id="CHEBI:30413"/>
    </cofactor>
</comment>
<comment type="subcellular location">
    <subcellularLocation>
        <location evidence="3">Cytoplasm</location>
    </subcellularLocation>
</comment>
<comment type="similarity">
    <text evidence="3">Belongs to the catalase family.</text>
</comment>
<keyword id="KW-0963">Cytoplasm</keyword>
<keyword id="KW-0349">Heme</keyword>
<keyword id="KW-0376">Hydrogen peroxide</keyword>
<keyword id="KW-0408">Iron</keyword>
<keyword id="KW-0479">Metal-binding</keyword>
<keyword id="KW-0560">Oxidoreductase</keyword>
<keyword id="KW-0575">Peroxidase</keyword>
<feature type="chain" id="PRO_0000084988" description="Catalase">
    <location>
        <begin position="1"/>
        <end position="505"/>
    </location>
</feature>
<feature type="active site" evidence="2">
    <location>
        <position position="56"/>
    </location>
</feature>
<feature type="active site" evidence="2">
    <location>
        <position position="129"/>
    </location>
</feature>
<feature type="binding site" description="axial binding residue" evidence="1">
    <location>
        <position position="339"/>
    </location>
    <ligand>
        <name>heme</name>
        <dbReference type="ChEBI" id="CHEBI:30413"/>
    </ligand>
    <ligandPart>
        <name>Fe</name>
        <dbReference type="ChEBI" id="CHEBI:18248"/>
    </ligandPart>
</feature>
<sequence length="505" mass="58527">MVNKDVKQTTAFGAPVWDDNNVITAGPRGPVLLQSTWFLEKLAAFDRERIPERVVHAKGSGAYGTFTVTKDITKYTKAKIFSKVGKKTECFFRFSTVAGEKGSADAVRDPRGFAMKYYTEEGNWDLVGNNTPVFFIRDAIKFPDFIHTQKRDPQTNLPNPDMVWDFWSNVPESLYQVTWVMSDRGIPKSFRHMDGFGSHTFSLINAKGERFWVKFHFETMQGVKHLTNEEAAEVRKYDPDSNQRDLFDAIAGGDFPKWKMSIQVMPEEDAKKYRFHPFDVTKIWYLQDYPLMEVGIVELNKNPENYFAEVEQAAFTPANVVPGIGYSPDRMLQGRLFSYGDTHRYRLGVNYPQIPVNRPRCPFHSSSRDGYMQNGYYGSLQNYTPSSLPGYKEDKSARDPKFNLAHIEKEFEVWNWDYRAEDSDYYTQPGDYYRSLPADEKERLYDTIGGSLAHVTHKEIVDKQLEHFKKADPKYAEGVKKALEKHQKMMKDMHAKDMHHMKKKK</sequence>
<evidence type="ECO:0000250" key="1"/>
<evidence type="ECO:0000255" key="2">
    <source>
        <dbReference type="PROSITE-ProRule" id="PRU10013"/>
    </source>
</evidence>
<evidence type="ECO:0000305" key="3"/>
<reference key="1">
    <citation type="journal article" date="1999" name="Nature">
        <title>Genomic sequence comparison of two unrelated isolates of the human gastric pathogen Helicobacter pylori.</title>
        <authorList>
            <person name="Alm R.A."/>
            <person name="Ling L.-S.L."/>
            <person name="Moir D.T."/>
            <person name="King B.L."/>
            <person name="Brown E.D."/>
            <person name="Doig P.C."/>
            <person name="Smith D.R."/>
            <person name="Noonan B."/>
            <person name="Guild B.C."/>
            <person name="deJonge B.L."/>
            <person name="Carmel G."/>
            <person name="Tummino P.J."/>
            <person name="Caruso A."/>
            <person name="Uria-Nickelsen M."/>
            <person name="Mills D.M."/>
            <person name="Ives C."/>
            <person name="Gibson R."/>
            <person name="Merberg D."/>
            <person name="Mills S.D."/>
            <person name="Jiang Q."/>
            <person name="Taylor D.E."/>
            <person name="Vovis G.F."/>
            <person name="Trust T.J."/>
        </authorList>
    </citation>
    <scope>NUCLEOTIDE SEQUENCE [LARGE SCALE GENOMIC DNA]</scope>
    <source>
        <strain>J99 / ATCC 700824</strain>
    </source>
</reference>
<name>CATA_HELPJ</name>
<dbReference type="EC" id="1.11.1.6"/>
<dbReference type="EMBL" id="AE001439">
    <property type="protein sequence ID" value="AAD06391.1"/>
    <property type="molecule type" value="Genomic_DNA"/>
</dbReference>
<dbReference type="PIR" id="F71885">
    <property type="entry name" value="F71885"/>
</dbReference>
<dbReference type="RefSeq" id="WP_000247320.1">
    <property type="nucleotide sequence ID" value="NC_000921.1"/>
</dbReference>
<dbReference type="SMR" id="Q9ZKX5"/>
<dbReference type="KEGG" id="hpj:jhp_0809"/>
<dbReference type="PATRIC" id="fig|85963.30.peg.163"/>
<dbReference type="eggNOG" id="COG0753">
    <property type="taxonomic scope" value="Bacteria"/>
</dbReference>
<dbReference type="Proteomes" id="UP000000804">
    <property type="component" value="Chromosome"/>
</dbReference>
<dbReference type="GO" id="GO:0005737">
    <property type="term" value="C:cytoplasm"/>
    <property type="evidence" value="ECO:0007669"/>
    <property type="project" value="UniProtKB-SubCell"/>
</dbReference>
<dbReference type="GO" id="GO:0004096">
    <property type="term" value="F:catalase activity"/>
    <property type="evidence" value="ECO:0007669"/>
    <property type="project" value="UniProtKB-EC"/>
</dbReference>
<dbReference type="GO" id="GO:0020037">
    <property type="term" value="F:heme binding"/>
    <property type="evidence" value="ECO:0007669"/>
    <property type="project" value="InterPro"/>
</dbReference>
<dbReference type="GO" id="GO:0046872">
    <property type="term" value="F:metal ion binding"/>
    <property type="evidence" value="ECO:0007669"/>
    <property type="project" value="UniProtKB-KW"/>
</dbReference>
<dbReference type="GO" id="GO:0042744">
    <property type="term" value="P:hydrogen peroxide catabolic process"/>
    <property type="evidence" value="ECO:0007669"/>
    <property type="project" value="UniProtKB-KW"/>
</dbReference>
<dbReference type="GO" id="GO:0042542">
    <property type="term" value="P:response to hydrogen peroxide"/>
    <property type="evidence" value="ECO:0007669"/>
    <property type="project" value="TreeGrafter"/>
</dbReference>
<dbReference type="CDD" id="cd08156">
    <property type="entry name" value="catalase_clade_3"/>
    <property type="match status" value="1"/>
</dbReference>
<dbReference type="FunFam" id="2.40.180.10:FF:000001">
    <property type="entry name" value="Catalase"/>
    <property type="match status" value="1"/>
</dbReference>
<dbReference type="Gene3D" id="2.40.180.10">
    <property type="entry name" value="Catalase core domain"/>
    <property type="match status" value="1"/>
</dbReference>
<dbReference type="InterPro" id="IPR018028">
    <property type="entry name" value="Catalase"/>
</dbReference>
<dbReference type="InterPro" id="IPR040333">
    <property type="entry name" value="Catalase_3"/>
</dbReference>
<dbReference type="InterPro" id="IPR024708">
    <property type="entry name" value="Catalase_AS"/>
</dbReference>
<dbReference type="InterPro" id="IPR024711">
    <property type="entry name" value="Catalase_clade1/3"/>
</dbReference>
<dbReference type="InterPro" id="IPR011614">
    <property type="entry name" value="Catalase_core"/>
</dbReference>
<dbReference type="InterPro" id="IPR002226">
    <property type="entry name" value="Catalase_haem_BS"/>
</dbReference>
<dbReference type="InterPro" id="IPR010582">
    <property type="entry name" value="Catalase_immune_responsive"/>
</dbReference>
<dbReference type="InterPro" id="IPR020835">
    <property type="entry name" value="Catalase_sf"/>
</dbReference>
<dbReference type="PANTHER" id="PTHR11465">
    <property type="entry name" value="CATALASE"/>
    <property type="match status" value="1"/>
</dbReference>
<dbReference type="PANTHER" id="PTHR11465:SF61">
    <property type="entry name" value="CATALASE"/>
    <property type="match status" value="1"/>
</dbReference>
<dbReference type="Pfam" id="PF00199">
    <property type="entry name" value="Catalase"/>
    <property type="match status" value="1"/>
</dbReference>
<dbReference type="Pfam" id="PF06628">
    <property type="entry name" value="Catalase-rel"/>
    <property type="match status" value="1"/>
</dbReference>
<dbReference type="PIRSF" id="PIRSF038928">
    <property type="entry name" value="Catalase_clade1-3"/>
    <property type="match status" value="1"/>
</dbReference>
<dbReference type="PRINTS" id="PR00067">
    <property type="entry name" value="CATALASE"/>
</dbReference>
<dbReference type="SMART" id="SM01060">
    <property type="entry name" value="Catalase"/>
    <property type="match status" value="1"/>
</dbReference>
<dbReference type="SUPFAM" id="SSF56634">
    <property type="entry name" value="Heme-dependent catalase-like"/>
    <property type="match status" value="1"/>
</dbReference>
<dbReference type="PROSITE" id="PS00437">
    <property type="entry name" value="CATALASE_1"/>
    <property type="match status" value="1"/>
</dbReference>
<dbReference type="PROSITE" id="PS00438">
    <property type="entry name" value="CATALASE_2"/>
    <property type="match status" value="1"/>
</dbReference>
<dbReference type="PROSITE" id="PS51402">
    <property type="entry name" value="CATALASE_3"/>
    <property type="match status" value="1"/>
</dbReference>
<organism>
    <name type="scientific">Helicobacter pylori (strain J99 / ATCC 700824)</name>
    <name type="common">Campylobacter pylori J99</name>
    <dbReference type="NCBI Taxonomy" id="85963"/>
    <lineage>
        <taxon>Bacteria</taxon>
        <taxon>Pseudomonadati</taxon>
        <taxon>Campylobacterota</taxon>
        <taxon>Epsilonproteobacteria</taxon>
        <taxon>Campylobacterales</taxon>
        <taxon>Helicobacteraceae</taxon>
        <taxon>Helicobacter</taxon>
    </lineage>
</organism>